<sequence>MRNKGDFLFTSESVSEGHPDKVADRISDTVLDAYLAADGESRVACETLVTTNRVVLAGEVRGPSSVTPEALIEGARAAIRDIGYDQAGFSWKNAQIESYLHAQSADIAVGVDSAGEKDEGAGDQGIMFGFATRETETLMPAPLFYAHGILHRIRDLRKAGDARVAMLQPDAKSQVTLRYVDGRPVGATSVVISTQHDEGASQAAIREALRDVVQDVLPEGWMCPEDEFYANPTGVFVIGGPDGDCGLTGRKIIVDTYGGAAPHGGGAFSGKDPTKVDRSAAYACRYLAKNVVAAGLADRCTLQISYAIGVSHPLSVYVDLDGTGKDVDEAKLGSVLREVMNLTPRGIRQHLRLNRPIYTETSAYGHFGRTPDEARDNFTWEKTDLVDALRGAFNR</sequence>
<evidence type="ECO:0000255" key="1">
    <source>
        <dbReference type="HAMAP-Rule" id="MF_00086"/>
    </source>
</evidence>
<reference key="1">
    <citation type="journal article" date="2009" name="BMC Genomics">
        <title>Complete genome sequence of the sugarcane nitrogen-fixing endophyte Gluconacetobacter diazotrophicus Pal5.</title>
        <authorList>
            <person name="Bertalan M."/>
            <person name="Albano R."/>
            <person name="de Padua V."/>
            <person name="Rouws L."/>
            <person name="Rojas C."/>
            <person name="Hemerly A."/>
            <person name="Teixeira K."/>
            <person name="Schwab S."/>
            <person name="Araujo J."/>
            <person name="Oliveira A."/>
            <person name="Franca L."/>
            <person name="Magalhaes V."/>
            <person name="Alqueres S."/>
            <person name="Cardoso A."/>
            <person name="Almeida W."/>
            <person name="Loureiro M.M."/>
            <person name="Nogueira E."/>
            <person name="Cidade D."/>
            <person name="Oliveira D."/>
            <person name="Simao T."/>
            <person name="Macedo J."/>
            <person name="Valadao A."/>
            <person name="Dreschsel M."/>
            <person name="Freitas F."/>
            <person name="Vidal M."/>
            <person name="Guedes H."/>
            <person name="Rodrigues E."/>
            <person name="Meneses C."/>
            <person name="Brioso P."/>
            <person name="Pozzer L."/>
            <person name="Figueiredo D."/>
            <person name="Montano H."/>
            <person name="Junior J."/>
            <person name="de Souza Filho G."/>
            <person name="Martin Quintana Flores V."/>
            <person name="Ferreira B."/>
            <person name="Branco A."/>
            <person name="Gonzalez P."/>
            <person name="Guillobel H."/>
            <person name="Lemos M."/>
            <person name="Seibel L."/>
            <person name="Macedo J."/>
            <person name="Alves-Ferreira M."/>
            <person name="Sachetto-Martins G."/>
            <person name="Coelho A."/>
            <person name="Santos E."/>
            <person name="Amaral G."/>
            <person name="Neves A."/>
            <person name="Pacheco A.B."/>
            <person name="Carvalho D."/>
            <person name="Lery L."/>
            <person name="Bisch P."/>
            <person name="Rossle S.C."/>
            <person name="Urmenyi T."/>
            <person name="Rael Pereira A."/>
            <person name="Silva R."/>
            <person name="Rondinelli E."/>
            <person name="von Kruger W."/>
            <person name="Martins O."/>
            <person name="Baldani J.I."/>
            <person name="Ferreira P.C."/>
        </authorList>
    </citation>
    <scope>NUCLEOTIDE SEQUENCE [LARGE SCALE GENOMIC DNA]</scope>
    <source>
        <strain>ATCC 49037 / DSM 5601 / CCUG 37298 / CIP 103539 / LMG 7603 / PAl5</strain>
    </source>
</reference>
<reference key="2">
    <citation type="journal article" date="2010" name="Stand. Genomic Sci.">
        <title>Two genome sequences of the same bacterial strain, Gluconacetobacter diazotrophicus PAl 5, suggest a new standard in genome sequence submission.</title>
        <authorList>
            <person name="Giongo A."/>
            <person name="Tyler H.L."/>
            <person name="Zipperer U.N."/>
            <person name="Triplett E.W."/>
        </authorList>
    </citation>
    <scope>NUCLEOTIDE SEQUENCE [LARGE SCALE GENOMIC DNA]</scope>
    <source>
        <strain>ATCC 49037 / DSM 5601 / CCUG 37298 / CIP 103539 / LMG 7603 / PAl5</strain>
    </source>
</reference>
<comment type="function">
    <text evidence="1">Catalyzes the formation of S-adenosylmethionine (AdoMet) from methionine and ATP. The overall synthetic reaction is composed of two sequential steps, AdoMet formation and the subsequent tripolyphosphate hydrolysis which occurs prior to release of AdoMet from the enzyme.</text>
</comment>
<comment type="catalytic activity">
    <reaction evidence="1">
        <text>L-methionine + ATP + H2O = S-adenosyl-L-methionine + phosphate + diphosphate</text>
        <dbReference type="Rhea" id="RHEA:21080"/>
        <dbReference type="ChEBI" id="CHEBI:15377"/>
        <dbReference type="ChEBI" id="CHEBI:30616"/>
        <dbReference type="ChEBI" id="CHEBI:33019"/>
        <dbReference type="ChEBI" id="CHEBI:43474"/>
        <dbReference type="ChEBI" id="CHEBI:57844"/>
        <dbReference type="ChEBI" id="CHEBI:59789"/>
        <dbReference type="EC" id="2.5.1.6"/>
    </reaction>
</comment>
<comment type="cofactor">
    <cofactor evidence="1">
        <name>Mg(2+)</name>
        <dbReference type="ChEBI" id="CHEBI:18420"/>
    </cofactor>
    <text evidence="1">Binds 2 divalent ions per subunit.</text>
</comment>
<comment type="cofactor">
    <cofactor evidence="1">
        <name>K(+)</name>
        <dbReference type="ChEBI" id="CHEBI:29103"/>
    </cofactor>
    <text evidence="1">Binds 1 potassium ion per subunit.</text>
</comment>
<comment type="pathway">
    <text evidence="1">Amino-acid biosynthesis; S-adenosyl-L-methionine biosynthesis; S-adenosyl-L-methionine from L-methionine: step 1/1.</text>
</comment>
<comment type="subunit">
    <text evidence="1">Homotetramer; dimer of dimers.</text>
</comment>
<comment type="subcellular location">
    <subcellularLocation>
        <location evidence="1">Cytoplasm</location>
    </subcellularLocation>
</comment>
<comment type="similarity">
    <text evidence="1">Belongs to the AdoMet synthase family.</text>
</comment>
<accession>A9HE98</accession>
<accession>B5ZCS2</accession>
<protein>
    <recommendedName>
        <fullName evidence="1">S-adenosylmethionine synthase</fullName>
        <shortName evidence="1">AdoMet synthase</shortName>
        <ecNumber evidence="1">2.5.1.6</ecNumber>
    </recommendedName>
    <alternativeName>
        <fullName evidence="1">MAT</fullName>
    </alternativeName>
    <alternativeName>
        <fullName evidence="1">Methionine adenosyltransferase</fullName>
    </alternativeName>
</protein>
<organism>
    <name type="scientific">Gluconacetobacter diazotrophicus (strain ATCC 49037 / DSM 5601 / CCUG 37298 / CIP 103539 / LMG 7603 / PAl5)</name>
    <dbReference type="NCBI Taxonomy" id="272568"/>
    <lineage>
        <taxon>Bacteria</taxon>
        <taxon>Pseudomonadati</taxon>
        <taxon>Pseudomonadota</taxon>
        <taxon>Alphaproteobacteria</taxon>
        <taxon>Acetobacterales</taxon>
        <taxon>Acetobacteraceae</taxon>
        <taxon>Gluconacetobacter</taxon>
    </lineage>
</organism>
<name>METK_GLUDA</name>
<feature type="chain" id="PRO_1000075378" description="S-adenosylmethionine synthase">
    <location>
        <begin position="1"/>
        <end position="395"/>
    </location>
</feature>
<feature type="region of interest" description="Flexible loop" evidence="1">
    <location>
        <begin position="103"/>
        <end position="113"/>
    </location>
</feature>
<feature type="binding site" description="in other chain" evidence="1">
    <location>
        <position position="18"/>
    </location>
    <ligand>
        <name>ATP</name>
        <dbReference type="ChEBI" id="CHEBI:30616"/>
        <note>ligand shared between two neighboring subunits</note>
    </ligand>
</feature>
<feature type="binding site" evidence="1">
    <location>
        <position position="20"/>
    </location>
    <ligand>
        <name>Mg(2+)</name>
        <dbReference type="ChEBI" id="CHEBI:18420"/>
    </ligand>
</feature>
<feature type="binding site" evidence="1">
    <location>
        <position position="46"/>
    </location>
    <ligand>
        <name>K(+)</name>
        <dbReference type="ChEBI" id="CHEBI:29103"/>
    </ligand>
</feature>
<feature type="binding site" description="in other chain" evidence="1">
    <location>
        <position position="59"/>
    </location>
    <ligand>
        <name>L-methionine</name>
        <dbReference type="ChEBI" id="CHEBI:57844"/>
        <note>ligand shared between two neighboring subunits</note>
    </ligand>
</feature>
<feature type="binding site" description="in other chain" evidence="1">
    <location>
        <position position="103"/>
    </location>
    <ligand>
        <name>L-methionine</name>
        <dbReference type="ChEBI" id="CHEBI:57844"/>
        <note>ligand shared between two neighboring subunits</note>
    </ligand>
</feature>
<feature type="binding site" description="in other chain" evidence="1">
    <location>
        <begin position="170"/>
        <end position="172"/>
    </location>
    <ligand>
        <name>ATP</name>
        <dbReference type="ChEBI" id="CHEBI:30616"/>
        <note>ligand shared between two neighboring subunits</note>
    </ligand>
</feature>
<feature type="binding site" evidence="1">
    <location>
        <position position="244"/>
    </location>
    <ligand>
        <name>ATP</name>
        <dbReference type="ChEBI" id="CHEBI:30616"/>
        <note>ligand shared between two neighboring subunits</note>
    </ligand>
</feature>
<feature type="binding site" evidence="1">
    <location>
        <position position="244"/>
    </location>
    <ligand>
        <name>L-methionine</name>
        <dbReference type="ChEBI" id="CHEBI:57844"/>
        <note>ligand shared between two neighboring subunits</note>
    </ligand>
</feature>
<feature type="binding site" description="in other chain" evidence="1">
    <location>
        <begin position="250"/>
        <end position="251"/>
    </location>
    <ligand>
        <name>ATP</name>
        <dbReference type="ChEBI" id="CHEBI:30616"/>
        <note>ligand shared between two neighboring subunits</note>
    </ligand>
</feature>
<feature type="binding site" evidence="1">
    <location>
        <position position="267"/>
    </location>
    <ligand>
        <name>ATP</name>
        <dbReference type="ChEBI" id="CHEBI:30616"/>
        <note>ligand shared between two neighboring subunits</note>
    </ligand>
</feature>
<feature type="binding site" evidence="1">
    <location>
        <position position="271"/>
    </location>
    <ligand>
        <name>ATP</name>
        <dbReference type="ChEBI" id="CHEBI:30616"/>
        <note>ligand shared between two neighboring subunits</note>
    </ligand>
</feature>
<feature type="binding site" description="in other chain" evidence="1">
    <location>
        <position position="275"/>
    </location>
    <ligand>
        <name>L-methionine</name>
        <dbReference type="ChEBI" id="CHEBI:57844"/>
        <note>ligand shared between two neighboring subunits</note>
    </ligand>
</feature>
<gene>
    <name evidence="1" type="primary">metK</name>
    <name type="ordered locus">GDI1259</name>
    <name type="ordered locus">Gdia_1970</name>
</gene>
<keyword id="KW-0067">ATP-binding</keyword>
<keyword id="KW-0963">Cytoplasm</keyword>
<keyword id="KW-0460">Magnesium</keyword>
<keyword id="KW-0479">Metal-binding</keyword>
<keyword id="KW-0547">Nucleotide-binding</keyword>
<keyword id="KW-0554">One-carbon metabolism</keyword>
<keyword id="KW-0630">Potassium</keyword>
<keyword id="KW-1185">Reference proteome</keyword>
<keyword id="KW-0808">Transferase</keyword>
<proteinExistence type="inferred from homology"/>
<dbReference type="EC" id="2.5.1.6" evidence="1"/>
<dbReference type="EMBL" id="AM889285">
    <property type="protein sequence ID" value="CAP55202.1"/>
    <property type="molecule type" value="Genomic_DNA"/>
</dbReference>
<dbReference type="EMBL" id="CP001189">
    <property type="protein sequence ID" value="ACI51730.1"/>
    <property type="molecule type" value="Genomic_DNA"/>
</dbReference>
<dbReference type="RefSeq" id="WP_012224427.1">
    <property type="nucleotide sequence ID" value="NC_010125.1"/>
</dbReference>
<dbReference type="SMR" id="A9HE98"/>
<dbReference type="STRING" id="272568.GDI1259"/>
<dbReference type="KEGG" id="gdi:GDI1259"/>
<dbReference type="KEGG" id="gdj:Gdia_1970"/>
<dbReference type="eggNOG" id="COG0192">
    <property type="taxonomic scope" value="Bacteria"/>
</dbReference>
<dbReference type="HOGENOM" id="CLU_041802_1_1_5"/>
<dbReference type="OrthoDB" id="9801686at2"/>
<dbReference type="UniPathway" id="UPA00315">
    <property type="reaction ID" value="UER00080"/>
</dbReference>
<dbReference type="Proteomes" id="UP000001176">
    <property type="component" value="Chromosome"/>
</dbReference>
<dbReference type="GO" id="GO:0005737">
    <property type="term" value="C:cytoplasm"/>
    <property type="evidence" value="ECO:0007669"/>
    <property type="project" value="UniProtKB-SubCell"/>
</dbReference>
<dbReference type="GO" id="GO:0005524">
    <property type="term" value="F:ATP binding"/>
    <property type="evidence" value="ECO:0007669"/>
    <property type="project" value="UniProtKB-UniRule"/>
</dbReference>
<dbReference type="GO" id="GO:0000287">
    <property type="term" value="F:magnesium ion binding"/>
    <property type="evidence" value="ECO:0007669"/>
    <property type="project" value="UniProtKB-UniRule"/>
</dbReference>
<dbReference type="GO" id="GO:0004478">
    <property type="term" value="F:methionine adenosyltransferase activity"/>
    <property type="evidence" value="ECO:0007669"/>
    <property type="project" value="UniProtKB-UniRule"/>
</dbReference>
<dbReference type="GO" id="GO:0006730">
    <property type="term" value="P:one-carbon metabolic process"/>
    <property type="evidence" value="ECO:0007669"/>
    <property type="project" value="UniProtKB-KW"/>
</dbReference>
<dbReference type="GO" id="GO:0006556">
    <property type="term" value="P:S-adenosylmethionine biosynthetic process"/>
    <property type="evidence" value="ECO:0007669"/>
    <property type="project" value="UniProtKB-UniRule"/>
</dbReference>
<dbReference type="CDD" id="cd18079">
    <property type="entry name" value="S-AdoMet_synt"/>
    <property type="match status" value="1"/>
</dbReference>
<dbReference type="Gene3D" id="3.30.300.10">
    <property type="match status" value="3"/>
</dbReference>
<dbReference type="HAMAP" id="MF_00086">
    <property type="entry name" value="S_AdoMet_synth1"/>
    <property type="match status" value="1"/>
</dbReference>
<dbReference type="InterPro" id="IPR022631">
    <property type="entry name" value="ADOMET_SYNTHASE_CS"/>
</dbReference>
<dbReference type="InterPro" id="IPR022630">
    <property type="entry name" value="S-AdoMet_synt_C"/>
</dbReference>
<dbReference type="InterPro" id="IPR022629">
    <property type="entry name" value="S-AdoMet_synt_central"/>
</dbReference>
<dbReference type="InterPro" id="IPR022628">
    <property type="entry name" value="S-AdoMet_synt_N"/>
</dbReference>
<dbReference type="InterPro" id="IPR002133">
    <property type="entry name" value="S-AdoMet_synthetase"/>
</dbReference>
<dbReference type="InterPro" id="IPR022636">
    <property type="entry name" value="S-AdoMet_synthetase_sfam"/>
</dbReference>
<dbReference type="NCBIfam" id="TIGR01034">
    <property type="entry name" value="metK"/>
    <property type="match status" value="1"/>
</dbReference>
<dbReference type="PANTHER" id="PTHR11964">
    <property type="entry name" value="S-ADENOSYLMETHIONINE SYNTHETASE"/>
    <property type="match status" value="1"/>
</dbReference>
<dbReference type="Pfam" id="PF02773">
    <property type="entry name" value="S-AdoMet_synt_C"/>
    <property type="match status" value="1"/>
</dbReference>
<dbReference type="Pfam" id="PF02772">
    <property type="entry name" value="S-AdoMet_synt_M"/>
    <property type="match status" value="1"/>
</dbReference>
<dbReference type="Pfam" id="PF00438">
    <property type="entry name" value="S-AdoMet_synt_N"/>
    <property type="match status" value="1"/>
</dbReference>
<dbReference type="PIRSF" id="PIRSF000497">
    <property type="entry name" value="MAT"/>
    <property type="match status" value="1"/>
</dbReference>
<dbReference type="SUPFAM" id="SSF55973">
    <property type="entry name" value="S-adenosylmethionine synthetase"/>
    <property type="match status" value="3"/>
</dbReference>
<dbReference type="PROSITE" id="PS00376">
    <property type="entry name" value="ADOMET_SYNTHASE_1"/>
    <property type="match status" value="1"/>
</dbReference>
<dbReference type="PROSITE" id="PS00377">
    <property type="entry name" value="ADOMET_SYNTHASE_2"/>
    <property type="match status" value="1"/>
</dbReference>